<dbReference type="EMBL" id="CP000644">
    <property type="protein sequence ID" value="ABO92024.1"/>
    <property type="status" value="ALT_FRAME"/>
    <property type="molecule type" value="Genomic_DNA"/>
</dbReference>
<dbReference type="SMR" id="A4ST02"/>
<dbReference type="STRING" id="29491.GCA_000820065_03469"/>
<dbReference type="KEGG" id="asa:ASA_4083"/>
<dbReference type="eggNOG" id="COG0185">
    <property type="taxonomic scope" value="Bacteria"/>
</dbReference>
<dbReference type="HOGENOM" id="CLU_144911_0_1_6"/>
<dbReference type="Proteomes" id="UP000000225">
    <property type="component" value="Chromosome"/>
</dbReference>
<dbReference type="GO" id="GO:0005737">
    <property type="term" value="C:cytoplasm"/>
    <property type="evidence" value="ECO:0007669"/>
    <property type="project" value="UniProtKB-ARBA"/>
</dbReference>
<dbReference type="GO" id="GO:0015935">
    <property type="term" value="C:small ribosomal subunit"/>
    <property type="evidence" value="ECO:0007669"/>
    <property type="project" value="InterPro"/>
</dbReference>
<dbReference type="GO" id="GO:0019843">
    <property type="term" value="F:rRNA binding"/>
    <property type="evidence" value="ECO:0007669"/>
    <property type="project" value="UniProtKB-UniRule"/>
</dbReference>
<dbReference type="GO" id="GO:0003735">
    <property type="term" value="F:structural constituent of ribosome"/>
    <property type="evidence" value="ECO:0007669"/>
    <property type="project" value="InterPro"/>
</dbReference>
<dbReference type="GO" id="GO:0000028">
    <property type="term" value="P:ribosomal small subunit assembly"/>
    <property type="evidence" value="ECO:0007669"/>
    <property type="project" value="TreeGrafter"/>
</dbReference>
<dbReference type="GO" id="GO:0006412">
    <property type="term" value="P:translation"/>
    <property type="evidence" value="ECO:0007669"/>
    <property type="project" value="UniProtKB-UniRule"/>
</dbReference>
<dbReference type="FunFam" id="3.30.860.10:FF:000001">
    <property type="entry name" value="30S ribosomal protein S19"/>
    <property type="match status" value="1"/>
</dbReference>
<dbReference type="Gene3D" id="3.30.860.10">
    <property type="entry name" value="30s Ribosomal Protein S19, Chain A"/>
    <property type="match status" value="1"/>
</dbReference>
<dbReference type="HAMAP" id="MF_00531">
    <property type="entry name" value="Ribosomal_uS19"/>
    <property type="match status" value="1"/>
</dbReference>
<dbReference type="InterPro" id="IPR002222">
    <property type="entry name" value="Ribosomal_uS19"/>
</dbReference>
<dbReference type="InterPro" id="IPR005732">
    <property type="entry name" value="Ribosomal_uS19_bac-type"/>
</dbReference>
<dbReference type="InterPro" id="IPR020934">
    <property type="entry name" value="Ribosomal_uS19_CS"/>
</dbReference>
<dbReference type="InterPro" id="IPR023575">
    <property type="entry name" value="Ribosomal_uS19_SF"/>
</dbReference>
<dbReference type="NCBIfam" id="TIGR01050">
    <property type="entry name" value="rpsS_bact"/>
    <property type="match status" value="1"/>
</dbReference>
<dbReference type="PANTHER" id="PTHR11880">
    <property type="entry name" value="RIBOSOMAL PROTEIN S19P FAMILY MEMBER"/>
    <property type="match status" value="1"/>
</dbReference>
<dbReference type="PANTHER" id="PTHR11880:SF8">
    <property type="entry name" value="SMALL RIBOSOMAL SUBUNIT PROTEIN US19M"/>
    <property type="match status" value="1"/>
</dbReference>
<dbReference type="Pfam" id="PF00203">
    <property type="entry name" value="Ribosomal_S19"/>
    <property type="match status" value="1"/>
</dbReference>
<dbReference type="PIRSF" id="PIRSF002144">
    <property type="entry name" value="Ribosomal_S19"/>
    <property type="match status" value="1"/>
</dbReference>
<dbReference type="PRINTS" id="PR00975">
    <property type="entry name" value="RIBOSOMALS19"/>
</dbReference>
<dbReference type="SUPFAM" id="SSF54570">
    <property type="entry name" value="Ribosomal protein S19"/>
    <property type="match status" value="1"/>
</dbReference>
<dbReference type="PROSITE" id="PS00323">
    <property type="entry name" value="RIBOSOMAL_S19"/>
    <property type="match status" value="1"/>
</dbReference>
<reference key="1">
    <citation type="journal article" date="2008" name="BMC Genomics">
        <title>The genome of Aeromonas salmonicida subsp. salmonicida A449: insights into the evolution of a fish pathogen.</title>
        <authorList>
            <person name="Reith M.E."/>
            <person name="Singh R.K."/>
            <person name="Curtis B."/>
            <person name="Boyd J.M."/>
            <person name="Bouevitch A."/>
            <person name="Kimball J."/>
            <person name="Munholland J."/>
            <person name="Murphy C."/>
            <person name="Sarty D."/>
            <person name="Williams J."/>
            <person name="Nash J.H."/>
            <person name="Johnson S.C."/>
            <person name="Brown L.L."/>
        </authorList>
    </citation>
    <scope>NUCLEOTIDE SEQUENCE [LARGE SCALE GENOMIC DNA]</scope>
    <source>
        <strain>A449</strain>
    </source>
</reference>
<evidence type="ECO:0000255" key="1">
    <source>
        <dbReference type="HAMAP-Rule" id="MF_00531"/>
    </source>
</evidence>
<evidence type="ECO:0000305" key="2"/>
<protein>
    <recommendedName>
        <fullName evidence="1">Small ribosomal subunit protein uS19</fullName>
    </recommendedName>
    <alternativeName>
        <fullName evidence="2">30S ribosomal protein S19</fullName>
    </alternativeName>
</protein>
<comment type="function">
    <text evidence="1">Protein S19 forms a complex with S13 that binds strongly to the 16S ribosomal RNA.</text>
</comment>
<comment type="similarity">
    <text evidence="1">Belongs to the universal ribosomal protein uS19 family.</text>
</comment>
<comment type="sequence caution" evidence="2">
    <conflict type="frameshift">
        <sequence resource="EMBL-CDS" id="ABO92024"/>
    </conflict>
</comment>
<feature type="chain" id="PRO_0000354281" description="Small ribosomal subunit protein uS19">
    <location>
        <begin position="1"/>
        <end position="92"/>
    </location>
</feature>
<gene>
    <name evidence="1" type="primary">rpsS</name>
    <name type="ordered locus">ASA_4083</name>
</gene>
<proteinExistence type="inferred from homology"/>
<sequence>MPRSLKKGPFIDLHLLKKVEKAVESGDKKPVKTWSRRSMIIPNMIGLTIAVHNGRQHVPVFVTEEMIGHKLGEFAPTRTYRGHAADKKAKKR</sequence>
<name>RS19_AERS4</name>
<keyword id="KW-0687">Ribonucleoprotein</keyword>
<keyword id="KW-0689">Ribosomal protein</keyword>
<keyword id="KW-0694">RNA-binding</keyword>
<keyword id="KW-0699">rRNA-binding</keyword>
<accession>A4ST02</accession>
<organism>
    <name type="scientific">Aeromonas salmonicida (strain A449)</name>
    <dbReference type="NCBI Taxonomy" id="382245"/>
    <lineage>
        <taxon>Bacteria</taxon>
        <taxon>Pseudomonadati</taxon>
        <taxon>Pseudomonadota</taxon>
        <taxon>Gammaproteobacteria</taxon>
        <taxon>Aeromonadales</taxon>
        <taxon>Aeromonadaceae</taxon>
        <taxon>Aeromonas</taxon>
    </lineage>
</organism>